<sequence length="185" mass="19271">MAAAARVSEVKAEGLLRGACAALAAAAALLVGLSTQTETVLLVRKKATVKDVQALWVLAMAAAAAAGYHLLQLLKCLYLGRVGGARPCRRSSRALAWTCLLLDKACAYTTFATTVAAAQACVVALDGAHAVQWTKLCNIYTRFCEQVAGSLVLGMLAAVGTAVLSAASARNVFRHYSSLETYAAH</sequence>
<protein>
    <recommendedName>
        <fullName>CASP-like protein 2C3</fullName>
        <shortName>ZmCASPL2C3</shortName>
    </recommendedName>
</protein>
<comment type="subunit">
    <text evidence="1">Homodimer and heterodimers.</text>
</comment>
<comment type="subcellular location">
    <subcellularLocation>
        <location evidence="1">Cell membrane</location>
        <topology evidence="1">Multi-pass membrane protein</topology>
    </subcellularLocation>
</comment>
<comment type="similarity">
    <text evidence="3">Belongs to the Casparian strip membrane proteins (CASP) family.</text>
</comment>
<organism>
    <name type="scientific">Zea mays</name>
    <name type="common">Maize</name>
    <dbReference type="NCBI Taxonomy" id="4577"/>
    <lineage>
        <taxon>Eukaryota</taxon>
        <taxon>Viridiplantae</taxon>
        <taxon>Streptophyta</taxon>
        <taxon>Embryophyta</taxon>
        <taxon>Tracheophyta</taxon>
        <taxon>Spermatophyta</taxon>
        <taxon>Magnoliopsida</taxon>
        <taxon>Liliopsida</taxon>
        <taxon>Poales</taxon>
        <taxon>Poaceae</taxon>
        <taxon>PACMAD clade</taxon>
        <taxon>Panicoideae</taxon>
        <taxon>Andropogonodae</taxon>
        <taxon>Andropogoneae</taxon>
        <taxon>Tripsacinae</taxon>
        <taxon>Zea</taxon>
    </lineage>
</organism>
<name>CSPLA_MAIZE</name>
<feature type="chain" id="PRO_0000391550" description="CASP-like protein 2C3">
    <location>
        <begin position="1"/>
        <end position="185"/>
    </location>
</feature>
<feature type="topological domain" description="Cytoplasmic" evidence="2">
    <location>
        <begin position="1"/>
        <end position="13"/>
    </location>
</feature>
<feature type="transmembrane region" description="Helical" evidence="2">
    <location>
        <begin position="14"/>
        <end position="34"/>
    </location>
</feature>
<feature type="topological domain" description="Extracellular" evidence="2">
    <location>
        <begin position="35"/>
        <end position="53"/>
    </location>
</feature>
<feature type="transmembrane region" description="Helical" evidence="2">
    <location>
        <begin position="54"/>
        <end position="74"/>
    </location>
</feature>
<feature type="topological domain" description="Cytoplasmic" evidence="2">
    <location>
        <begin position="75"/>
        <end position="104"/>
    </location>
</feature>
<feature type="transmembrane region" description="Helical" evidence="2">
    <location>
        <begin position="105"/>
        <end position="125"/>
    </location>
</feature>
<feature type="topological domain" description="Extracellular" evidence="2">
    <location>
        <begin position="126"/>
        <end position="146"/>
    </location>
</feature>
<feature type="transmembrane region" description="Helical" evidence="2">
    <location>
        <begin position="147"/>
        <end position="167"/>
    </location>
</feature>
<feature type="topological domain" description="Cytoplasmic" evidence="2">
    <location>
        <begin position="168"/>
        <end position="185"/>
    </location>
</feature>
<proteinExistence type="evidence at transcript level"/>
<evidence type="ECO:0000250" key="1"/>
<evidence type="ECO:0000255" key="2"/>
<evidence type="ECO:0000305" key="3"/>
<reference key="1">
    <citation type="journal article" date="2009" name="Plant Mol. Biol.">
        <title>Insights into corn genes derived from large-scale cDNA sequencing.</title>
        <authorList>
            <person name="Alexandrov N.N."/>
            <person name="Brover V.V."/>
            <person name="Freidin S."/>
            <person name="Troukhan M.E."/>
            <person name="Tatarinova T.V."/>
            <person name="Zhang H."/>
            <person name="Swaller T.J."/>
            <person name="Lu Y.-P."/>
            <person name="Bouck J."/>
            <person name="Flavell R.B."/>
            <person name="Feldmann K.A."/>
        </authorList>
    </citation>
    <scope>NUCLEOTIDE SEQUENCE [LARGE SCALE MRNA]</scope>
</reference>
<reference key="2">
    <citation type="journal article" date="2014" name="Plant Physiol.">
        <title>Functional and evolutionary analysis of the CASPARIAN STRIP MEMBRANE DOMAIN PROTEIN family.</title>
        <authorList>
            <person name="Roppolo D."/>
            <person name="Boeckmann B."/>
            <person name="Pfister A."/>
            <person name="Boutet E."/>
            <person name="Rubio M.C."/>
            <person name="Denervaud-Tendon V."/>
            <person name="Vermeer J.E."/>
            <person name="Gheyselinck J."/>
            <person name="Xenarios I."/>
            <person name="Geldner N."/>
        </authorList>
    </citation>
    <scope>GENE FAMILY</scope>
    <scope>NOMENCLATURE</scope>
</reference>
<keyword id="KW-1003">Cell membrane</keyword>
<keyword id="KW-0472">Membrane</keyword>
<keyword id="KW-1185">Reference proteome</keyword>
<keyword id="KW-0812">Transmembrane</keyword>
<keyword id="KW-1133">Transmembrane helix</keyword>
<dbReference type="EMBL" id="EU958072">
    <property type="protein sequence ID" value="ACG30190.1"/>
    <property type="molecule type" value="mRNA"/>
</dbReference>
<dbReference type="RefSeq" id="NP_001353629.1">
    <property type="nucleotide sequence ID" value="NM_001366700.1"/>
</dbReference>
<dbReference type="SMR" id="B6SZA7"/>
<dbReference type="FunCoup" id="B6SZA7">
    <property type="interactions" value="73"/>
</dbReference>
<dbReference type="PaxDb" id="4577-GRMZM2G055273_P01"/>
<dbReference type="GeneID" id="100284498"/>
<dbReference type="eggNOG" id="ENOG502S20T">
    <property type="taxonomic scope" value="Eukaryota"/>
</dbReference>
<dbReference type="HOGENOM" id="CLU_066104_0_0_1"/>
<dbReference type="InParanoid" id="B6SZA7"/>
<dbReference type="OMA" id="KGCAYMT"/>
<dbReference type="OrthoDB" id="689315at2759"/>
<dbReference type="Proteomes" id="UP000007305">
    <property type="component" value="Unplaced"/>
</dbReference>
<dbReference type="ExpressionAtlas" id="B6SZA7">
    <property type="expression patterns" value="baseline and differential"/>
</dbReference>
<dbReference type="GO" id="GO:0005886">
    <property type="term" value="C:plasma membrane"/>
    <property type="evidence" value="ECO:0007669"/>
    <property type="project" value="UniProtKB-SubCell"/>
</dbReference>
<dbReference type="InterPro" id="IPR006459">
    <property type="entry name" value="CASP/CASPL"/>
</dbReference>
<dbReference type="InterPro" id="IPR006702">
    <property type="entry name" value="CASP_dom"/>
</dbReference>
<dbReference type="NCBIfam" id="TIGR01569">
    <property type="entry name" value="A_tha_TIGR01569"/>
    <property type="match status" value="1"/>
</dbReference>
<dbReference type="PANTHER" id="PTHR33573:SF30">
    <property type="entry name" value="CASP-LIKE PROTEIN 2C1-RELATED"/>
    <property type="match status" value="1"/>
</dbReference>
<dbReference type="PANTHER" id="PTHR33573">
    <property type="entry name" value="CASP-LIKE PROTEIN 4A4"/>
    <property type="match status" value="1"/>
</dbReference>
<dbReference type="Pfam" id="PF04535">
    <property type="entry name" value="CASP_dom"/>
    <property type="match status" value="1"/>
</dbReference>
<accession>B6SZA7</accession>